<organism>
    <name type="scientific">Escherichia coli O6:H1 (strain CFT073 / ATCC 700928 / UPEC)</name>
    <dbReference type="NCBI Taxonomy" id="199310"/>
    <lineage>
        <taxon>Bacteria</taxon>
        <taxon>Pseudomonadati</taxon>
        <taxon>Pseudomonadota</taxon>
        <taxon>Gammaproteobacteria</taxon>
        <taxon>Enterobacterales</taxon>
        <taxon>Enterobacteriaceae</taxon>
        <taxon>Escherichia</taxon>
    </lineage>
</organism>
<keyword id="KW-1185">Reference proteome</keyword>
<keyword id="KW-0831">Ubiquinone biosynthesis</keyword>
<evidence type="ECO:0000255" key="1">
    <source>
        <dbReference type="HAMAP-Rule" id="MF_02231"/>
    </source>
</evidence>
<evidence type="ECO:0000305" key="2"/>
<accession>P64600</accession>
<accession>P45474</accession>
<name>UBIT_ECOL6</name>
<comment type="function">
    <text evidence="1">Required for O(2)-independent ubiquinone (coenzyme Q) biosynthesis. Likely functions as an accessory factor.</text>
</comment>
<comment type="pathway">
    <text evidence="1">Cofactor biosynthesis; ubiquinone biosynthesis.</text>
</comment>
<comment type="similarity">
    <text evidence="1">Belongs to the UbiT family.</text>
</comment>
<comment type="sequence caution" evidence="2">
    <conflict type="erroneous initiation">
        <sequence resource="EMBL-CDS" id="AAN82351"/>
    </conflict>
    <text>Extended N-terminus.</text>
</comment>
<reference key="1">
    <citation type="journal article" date="2002" name="Proc. Natl. Acad. Sci. U.S.A.">
        <title>Extensive mosaic structure revealed by the complete genome sequence of uropathogenic Escherichia coli.</title>
        <authorList>
            <person name="Welch R.A."/>
            <person name="Burland V."/>
            <person name="Plunkett G. III"/>
            <person name="Redford P."/>
            <person name="Roesch P."/>
            <person name="Rasko D."/>
            <person name="Buckles E.L."/>
            <person name="Liou S.-R."/>
            <person name="Boutin A."/>
            <person name="Hackett J."/>
            <person name="Stroud D."/>
            <person name="Mayhew G.F."/>
            <person name="Rose D.J."/>
            <person name="Zhou S."/>
            <person name="Schwartz D.C."/>
            <person name="Perna N.T."/>
            <person name="Mobley H.L.T."/>
            <person name="Donnenberg M.S."/>
            <person name="Blattner F.R."/>
        </authorList>
    </citation>
    <scope>NUCLEOTIDE SEQUENCE [LARGE SCALE GENOMIC DNA]</scope>
    <source>
        <strain>CFT073 / ATCC 700928 / UPEC</strain>
    </source>
</reference>
<proteinExistence type="inferred from homology"/>
<gene>
    <name evidence="1" type="primary">ubiT</name>
    <name type="synonym">yhbT</name>
    <name type="ordered locus">c3910</name>
</gene>
<dbReference type="EMBL" id="AE014075">
    <property type="protein sequence ID" value="AAN82351.1"/>
    <property type="status" value="ALT_INIT"/>
    <property type="molecule type" value="Genomic_DNA"/>
</dbReference>
<dbReference type="RefSeq" id="WP_001295552.1">
    <property type="nucleotide sequence ID" value="NZ_CP051263.1"/>
</dbReference>
<dbReference type="SMR" id="P64600"/>
<dbReference type="STRING" id="199310.c3910"/>
<dbReference type="KEGG" id="ecc:c3910"/>
<dbReference type="eggNOG" id="COG3154">
    <property type="taxonomic scope" value="Bacteria"/>
</dbReference>
<dbReference type="HOGENOM" id="CLU_111894_1_0_6"/>
<dbReference type="UniPathway" id="UPA00232"/>
<dbReference type="Proteomes" id="UP000001410">
    <property type="component" value="Chromosome"/>
</dbReference>
<dbReference type="GO" id="GO:0005829">
    <property type="term" value="C:cytosol"/>
    <property type="evidence" value="ECO:0007669"/>
    <property type="project" value="TreeGrafter"/>
</dbReference>
<dbReference type="GO" id="GO:0006744">
    <property type="term" value="P:ubiquinone biosynthetic process"/>
    <property type="evidence" value="ECO:0007669"/>
    <property type="project" value="UniProtKB-UniRule"/>
</dbReference>
<dbReference type="FunFam" id="3.30.1050.10:FF:000002">
    <property type="entry name" value="SCP2 domain-containing protein YhbT"/>
    <property type="match status" value="1"/>
</dbReference>
<dbReference type="Gene3D" id="3.30.1050.10">
    <property type="entry name" value="SCP2 sterol-binding domain"/>
    <property type="match status" value="1"/>
</dbReference>
<dbReference type="HAMAP" id="MF_02231">
    <property type="entry name" value="UbiT"/>
    <property type="match status" value="1"/>
</dbReference>
<dbReference type="InterPro" id="IPR003033">
    <property type="entry name" value="SCP2_sterol-bd_dom"/>
</dbReference>
<dbReference type="InterPro" id="IPR036527">
    <property type="entry name" value="SCP2_sterol-bd_dom_sf"/>
</dbReference>
<dbReference type="InterPro" id="IPR016830">
    <property type="entry name" value="UbiT"/>
</dbReference>
<dbReference type="PANTHER" id="PTHR10094:SF25">
    <property type="entry name" value="SCP2 STEROL-BINDING DOMAIN-CONTAINING PROTEIN 1"/>
    <property type="match status" value="1"/>
</dbReference>
<dbReference type="PANTHER" id="PTHR10094">
    <property type="entry name" value="STEROL CARRIER PROTEIN 2 SCP-2 FAMILY PROTEIN"/>
    <property type="match status" value="1"/>
</dbReference>
<dbReference type="Pfam" id="PF02036">
    <property type="entry name" value="SCP2"/>
    <property type="match status" value="1"/>
</dbReference>
<dbReference type="PIRSF" id="PIRSF025550">
    <property type="entry name" value="UCP025550_lpd_carrier"/>
    <property type="match status" value="1"/>
</dbReference>
<dbReference type="SUPFAM" id="SSF55718">
    <property type="entry name" value="SCP-like"/>
    <property type="match status" value="1"/>
</dbReference>
<feature type="chain" id="PRO_0000169458" description="Ubiquinone biosynthesis accessory factor UbiT">
    <location>
        <begin position="1"/>
        <end position="174"/>
    </location>
</feature>
<feature type="domain" description="SCP2" evidence="1">
    <location>
        <begin position="45"/>
        <end position="133"/>
    </location>
</feature>
<protein>
    <recommendedName>
        <fullName evidence="1">Ubiquinone biosynthesis accessory factor UbiT</fullName>
    </recommendedName>
</protein>
<sequence length="174" mass="19672">MLDKLRSRIVHLGPSLLSVPVKLTPFALKRQVLEQVLSWQFRQALDDGELEFLEGRWLSIHVRDIDLQWFTSVVNGKLVVSQNAQADVSFSADASDLLMIAARKQDPDTLFFQRRLVIEGDTELGLYVKNLMDAIELEQMPKALRMMLLQLADFVEAGMKTAPETKQTSVGEPC</sequence>